<keyword id="KW-0378">Hydrolase</keyword>
<keyword id="KW-0408">Iron</keyword>
<keyword id="KW-0479">Metal-binding</keyword>
<keyword id="KW-0648">Protein biosynthesis</keyword>
<protein>
    <recommendedName>
        <fullName evidence="1">Peptide deformylase</fullName>
        <shortName evidence="1">PDF</shortName>
        <ecNumber evidence="1">3.5.1.88</ecNumber>
    </recommendedName>
    <alternativeName>
        <fullName evidence="1">Polypeptide deformylase</fullName>
    </alternativeName>
</protein>
<proteinExistence type="inferred from homology"/>
<sequence>MSVLQVLHYPDDRLRKVAAPVKEVNANIQRIVDDMFETMYAEEGIGLAATQVDIHQRIIVIDVSENRDQRLVLINPELLEKSGETGIEEGCLSIPEQRALVPRAAAVKIRALDRDGKPFELEADDLLAICIQHEMDHLVGKLFVDYLSPLKRQRIRQKLEKMAKLNARA</sequence>
<gene>
    <name evidence="1" type="primary">def</name>
    <name type="ordered locus">Spro_4511</name>
</gene>
<accession>A8GKG5</accession>
<feature type="chain" id="PRO_1000058245" description="Peptide deformylase">
    <location>
        <begin position="1"/>
        <end position="169"/>
    </location>
</feature>
<feature type="active site" evidence="1">
    <location>
        <position position="134"/>
    </location>
</feature>
<feature type="binding site" evidence="1">
    <location>
        <position position="91"/>
    </location>
    <ligand>
        <name>Fe cation</name>
        <dbReference type="ChEBI" id="CHEBI:24875"/>
    </ligand>
</feature>
<feature type="binding site" evidence="1">
    <location>
        <position position="133"/>
    </location>
    <ligand>
        <name>Fe cation</name>
        <dbReference type="ChEBI" id="CHEBI:24875"/>
    </ligand>
</feature>
<feature type="binding site" evidence="1">
    <location>
        <position position="137"/>
    </location>
    <ligand>
        <name>Fe cation</name>
        <dbReference type="ChEBI" id="CHEBI:24875"/>
    </ligand>
</feature>
<name>DEF_SERP5</name>
<reference key="1">
    <citation type="submission" date="2007-09" db="EMBL/GenBank/DDBJ databases">
        <title>Complete sequence of chromosome of Serratia proteamaculans 568.</title>
        <authorList>
            <consortium name="US DOE Joint Genome Institute"/>
            <person name="Copeland A."/>
            <person name="Lucas S."/>
            <person name="Lapidus A."/>
            <person name="Barry K."/>
            <person name="Glavina del Rio T."/>
            <person name="Dalin E."/>
            <person name="Tice H."/>
            <person name="Pitluck S."/>
            <person name="Chain P."/>
            <person name="Malfatti S."/>
            <person name="Shin M."/>
            <person name="Vergez L."/>
            <person name="Schmutz J."/>
            <person name="Larimer F."/>
            <person name="Land M."/>
            <person name="Hauser L."/>
            <person name="Kyrpides N."/>
            <person name="Kim E."/>
            <person name="Taghavi S."/>
            <person name="Newman L."/>
            <person name="Vangronsveld J."/>
            <person name="van der Lelie D."/>
            <person name="Richardson P."/>
        </authorList>
    </citation>
    <scope>NUCLEOTIDE SEQUENCE [LARGE SCALE GENOMIC DNA]</scope>
    <source>
        <strain>568</strain>
    </source>
</reference>
<evidence type="ECO:0000255" key="1">
    <source>
        <dbReference type="HAMAP-Rule" id="MF_00163"/>
    </source>
</evidence>
<organism>
    <name type="scientific">Serratia proteamaculans (strain 568)</name>
    <dbReference type="NCBI Taxonomy" id="399741"/>
    <lineage>
        <taxon>Bacteria</taxon>
        <taxon>Pseudomonadati</taxon>
        <taxon>Pseudomonadota</taxon>
        <taxon>Gammaproteobacteria</taxon>
        <taxon>Enterobacterales</taxon>
        <taxon>Yersiniaceae</taxon>
        <taxon>Serratia</taxon>
    </lineage>
</organism>
<dbReference type="EC" id="3.5.1.88" evidence="1"/>
<dbReference type="EMBL" id="CP000826">
    <property type="protein sequence ID" value="ABV43605.1"/>
    <property type="molecule type" value="Genomic_DNA"/>
</dbReference>
<dbReference type="SMR" id="A8GKG5"/>
<dbReference type="STRING" id="399741.Spro_4511"/>
<dbReference type="KEGG" id="spe:Spro_4511"/>
<dbReference type="eggNOG" id="COG0242">
    <property type="taxonomic scope" value="Bacteria"/>
</dbReference>
<dbReference type="HOGENOM" id="CLU_061901_2_1_6"/>
<dbReference type="OrthoDB" id="9804313at2"/>
<dbReference type="GO" id="GO:0046872">
    <property type="term" value="F:metal ion binding"/>
    <property type="evidence" value="ECO:0007669"/>
    <property type="project" value="UniProtKB-KW"/>
</dbReference>
<dbReference type="GO" id="GO:0042586">
    <property type="term" value="F:peptide deformylase activity"/>
    <property type="evidence" value="ECO:0007669"/>
    <property type="project" value="UniProtKB-UniRule"/>
</dbReference>
<dbReference type="GO" id="GO:0043686">
    <property type="term" value="P:co-translational protein modification"/>
    <property type="evidence" value="ECO:0007669"/>
    <property type="project" value="TreeGrafter"/>
</dbReference>
<dbReference type="GO" id="GO:0006412">
    <property type="term" value="P:translation"/>
    <property type="evidence" value="ECO:0007669"/>
    <property type="project" value="UniProtKB-UniRule"/>
</dbReference>
<dbReference type="CDD" id="cd00487">
    <property type="entry name" value="Pep_deformylase"/>
    <property type="match status" value="1"/>
</dbReference>
<dbReference type="FunFam" id="3.90.45.10:FF:000001">
    <property type="entry name" value="Peptide deformylase"/>
    <property type="match status" value="1"/>
</dbReference>
<dbReference type="Gene3D" id="3.90.45.10">
    <property type="entry name" value="Peptide deformylase"/>
    <property type="match status" value="1"/>
</dbReference>
<dbReference type="HAMAP" id="MF_00163">
    <property type="entry name" value="Pep_deformylase"/>
    <property type="match status" value="1"/>
</dbReference>
<dbReference type="InterPro" id="IPR023635">
    <property type="entry name" value="Peptide_deformylase"/>
</dbReference>
<dbReference type="InterPro" id="IPR036821">
    <property type="entry name" value="Peptide_deformylase_sf"/>
</dbReference>
<dbReference type="NCBIfam" id="TIGR00079">
    <property type="entry name" value="pept_deformyl"/>
    <property type="match status" value="1"/>
</dbReference>
<dbReference type="NCBIfam" id="NF001159">
    <property type="entry name" value="PRK00150.1-3"/>
    <property type="match status" value="1"/>
</dbReference>
<dbReference type="PANTHER" id="PTHR10458">
    <property type="entry name" value="PEPTIDE DEFORMYLASE"/>
    <property type="match status" value="1"/>
</dbReference>
<dbReference type="PANTHER" id="PTHR10458:SF21">
    <property type="entry name" value="PEPTIDE DEFORMYLASE"/>
    <property type="match status" value="1"/>
</dbReference>
<dbReference type="Pfam" id="PF01327">
    <property type="entry name" value="Pep_deformylase"/>
    <property type="match status" value="1"/>
</dbReference>
<dbReference type="PIRSF" id="PIRSF004749">
    <property type="entry name" value="Pep_def"/>
    <property type="match status" value="1"/>
</dbReference>
<dbReference type="PRINTS" id="PR01576">
    <property type="entry name" value="PDEFORMYLASE"/>
</dbReference>
<dbReference type="SUPFAM" id="SSF56420">
    <property type="entry name" value="Peptide deformylase"/>
    <property type="match status" value="1"/>
</dbReference>
<comment type="function">
    <text evidence="1">Removes the formyl group from the N-terminal Met of newly synthesized proteins. Requires at least a dipeptide for an efficient rate of reaction. N-terminal L-methionine is a prerequisite for activity but the enzyme has broad specificity at other positions.</text>
</comment>
<comment type="catalytic activity">
    <reaction evidence="1">
        <text>N-terminal N-formyl-L-methionyl-[peptide] + H2O = N-terminal L-methionyl-[peptide] + formate</text>
        <dbReference type="Rhea" id="RHEA:24420"/>
        <dbReference type="Rhea" id="RHEA-COMP:10639"/>
        <dbReference type="Rhea" id="RHEA-COMP:10640"/>
        <dbReference type="ChEBI" id="CHEBI:15377"/>
        <dbReference type="ChEBI" id="CHEBI:15740"/>
        <dbReference type="ChEBI" id="CHEBI:49298"/>
        <dbReference type="ChEBI" id="CHEBI:64731"/>
        <dbReference type="EC" id="3.5.1.88"/>
    </reaction>
</comment>
<comment type="cofactor">
    <cofactor evidence="1">
        <name>Fe(2+)</name>
        <dbReference type="ChEBI" id="CHEBI:29033"/>
    </cofactor>
    <text evidence="1">Binds 1 Fe(2+) ion.</text>
</comment>
<comment type="similarity">
    <text evidence="1">Belongs to the polypeptide deformylase family.</text>
</comment>